<sequence>MPSVQKTVVKKSHKFVIDCTAPAGKIVDVAAFEKYLHDRIKVDNKVGNLGSTVVISKDKSKIIINTTIPFSKRYLKYLTKKFLKFKQIRDFLRVVATTKNTYELRYFNIGDSESQE</sequence>
<dbReference type="EMBL" id="AAFI02000109">
    <property type="protein sequence ID" value="EAL63395.1"/>
    <property type="molecule type" value="Genomic_DNA"/>
</dbReference>
<dbReference type="RefSeq" id="XP_636907.1">
    <property type="nucleotide sequence ID" value="XM_631815.1"/>
</dbReference>
<dbReference type="SMR" id="Q54JE3"/>
<dbReference type="FunCoup" id="Q54JE3">
    <property type="interactions" value="593"/>
</dbReference>
<dbReference type="STRING" id="44689.Q54JE3"/>
<dbReference type="PaxDb" id="44689-DDB0230146"/>
<dbReference type="EnsemblProtists" id="EAL63395">
    <property type="protein sequence ID" value="EAL63395"/>
    <property type="gene ID" value="DDB_G0288101"/>
</dbReference>
<dbReference type="GeneID" id="8626462"/>
<dbReference type="KEGG" id="ddi:DDB_G0288101"/>
<dbReference type="dictyBase" id="DDB_G0288101">
    <property type="gene designation" value="rpl22"/>
</dbReference>
<dbReference type="VEuPathDB" id="AmoebaDB:DDB_G0288101"/>
<dbReference type="eggNOG" id="KOG3434">
    <property type="taxonomic scope" value="Eukaryota"/>
</dbReference>
<dbReference type="HOGENOM" id="CLU_105624_0_0_1"/>
<dbReference type="InParanoid" id="Q54JE3"/>
<dbReference type="OMA" id="YQLRFYN"/>
<dbReference type="PhylomeDB" id="Q54JE3"/>
<dbReference type="PRO" id="PR:Q54JE3"/>
<dbReference type="Proteomes" id="UP000002195">
    <property type="component" value="Chromosome 5"/>
</dbReference>
<dbReference type="GO" id="GO:1990904">
    <property type="term" value="C:ribonucleoprotein complex"/>
    <property type="evidence" value="ECO:0007669"/>
    <property type="project" value="UniProtKB-KW"/>
</dbReference>
<dbReference type="GO" id="GO:0005840">
    <property type="term" value="C:ribosome"/>
    <property type="evidence" value="ECO:0007669"/>
    <property type="project" value="UniProtKB-KW"/>
</dbReference>
<dbReference type="GO" id="GO:0003723">
    <property type="term" value="F:RNA binding"/>
    <property type="evidence" value="ECO:0000318"/>
    <property type="project" value="GO_Central"/>
</dbReference>
<dbReference type="GO" id="GO:0003735">
    <property type="term" value="F:structural constituent of ribosome"/>
    <property type="evidence" value="ECO:0000318"/>
    <property type="project" value="GO_Central"/>
</dbReference>
<dbReference type="GO" id="GO:0002181">
    <property type="term" value="P:cytoplasmic translation"/>
    <property type="evidence" value="ECO:0000318"/>
    <property type="project" value="GO_Central"/>
</dbReference>
<dbReference type="FunFam" id="3.30.1360.210:FF:000003">
    <property type="entry name" value="60S ribosomal protein L22-B"/>
    <property type="match status" value="1"/>
</dbReference>
<dbReference type="Gene3D" id="3.30.1360.210">
    <property type="match status" value="1"/>
</dbReference>
<dbReference type="InterPro" id="IPR002671">
    <property type="entry name" value="Ribosomal_eL22"/>
</dbReference>
<dbReference type="InterPro" id="IPR038526">
    <property type="entry name" value="Ribosomal_eL22_sf"/>
</dbReference>
<dbReference type="PANTHER" id="PTHR10064">
    <property type="entry name" value="60S RIBOSOMAL PROTEIN L22"/>
    <property type="match status" value="1"/>
</dbReference>
<dbReference type="PANTHER" id="PTHR10064:SF31">
    <property type="entry name" value="LARGE RIBOSOMAL SUBUNIT PROTEIN EL22A-RELATED"/>
    <property type="match status" value="1"/>
</dbReference>
<dbReference type="Pfam" id="PF01776">
    <property type="entry name" value="Ribosomal_L22e"/>
    <property type="match status" value="1"/>
</dbReference>
<proteinExistence type="inferred from homology"/>
<comment type="similarity">
    <text evidence="1">Belongs to the eukaryotic ribosomal protein eL22 family.</text>
</comment>
<organism>
    <name type="scientific">Dictyostelium discoideum</name>
    <name type="common">Social amoeba</name>
    <dbReference type="NCBI Taxonomy" id="44689"/>
    <lineage>
        <taxon>Eukaryota</taxon>
        <taxon>Amoebozoa</taxon>
        <taxon>Evosea</taxon>
        <taxon>Eumycetozoa</taxon>
        <taxon>Dictyostelia</taxon>
        <taxon>Dictyosteliales</taxon>
        <taxon>Dictyosteliaceae</taxon>
        <taxon>Dictyostelium</taxon>
    </lineage>
</organism>
<accession>Q54JE3</accession>
<evidence type="ECO:0000305" key="1"/>
<name>RL221_DICDI</name>
<reference key="1">
    <citation type="journal article" date="2005" name="Nature">
        <title>The genome of the social amoeba Dictyostelium discoideum.</title>
        <authorList>
            <person name="Eichinger L."/>
            <person name="Pachebat J.A."/>
            <person name="Gloeckner G."/>
            <person name="Rajandream M.A."/>
            <person name="Sucgang R."/>
            <person name="Berriman M."/>
            <person name="Song J."/>
            <person name="Olsen R."/>
            <person name="Szafranski K."/>
            <person name="Xu Q."/>
            <person name="Tunggal B."/>
            <person name="Kummerfeld S."/>
            <person name="Madera M."/>
            <person name="Konfortov B.A."/>
            <person name="Rivero F."/>
            <person name="Bankier A.T."/>
            <person name="Lehmann R."/>
            <person name="Hamlin N."/>
            <person name="Davies R."/>
            <person name="Gaudet P."/>
            <person name="Fey P."/>
            <person name="Pilcher K."/>
            <person name="Chen G."/>
            <person name="Saunders D."/>
            <person name="Sodergren E.J."/>
            <person name="Davis P."/>
            <person name="Kerhornou A."/>
            <person name="Nie X."/>
            <person name="Hall N."/>
            <person name="Anjard C."/>
            <person name="Hemphill L."/>
            <person name="Bason N."/>
            <person name="Farbrother P."/>
            <person name="Desany B."/>
            <person name="Just E."/>
            <person name="Morio T."/>
            <person name="Rost R."/>
            <person name="Churcher C.M."/>
            <person name="Cooper J."/>
            <person name="Haydock S."/>
            <person name="van Driessche N."/>
            <person name="Cronin A."/>
            <person name="Goodhead I."/>
            <person name="Muzny D.M."/>
            <person name="Mourier T."/>
            <person name="Pain A."/>
            <person name="Lu M."/>
            <person name="Harper D."/>
            <person name="Lindsay R."/>
            <person name="Hauser H."/>
            <person name="James K.D."/>
            <person name="Quiles M."/>
            <person name="Madan Babu M."/>
            <person name="Saito T."/>
            <person name="Buchrieser C."/>
            <person name="Wardroper A."/>
            <person name="Felder M."/>
            <person name="Thangavelu M."/>
            <person name="Johnson D."/>
            <person name="Knights A."/>
            <person name="Loulseged H."/>
            <person name="Mungall K.L."/>
            <person name="Oliver K."/>
            <person name="Price C."/>
            <person name="Quail M.A."/>
            <person name="Urushihara H."/>
            <person name="Hernandez J."/>
            <person name="Rabbinowitsch E."/>
            <person name="Steffen D."/>
            <person name="Sanders M."/>
            <person name="Ma J."/>
            <person name="Kohara Y."/>
            <person name="Sharp S."/>
            <person name="Simmonds M.N."/>
            <person name="Spiegler S."/>
            <person name="Tivey A."/>
            <person name="Sugano S."/>
            <person name="White B."/>
            <person name="Walker D."/>
            <person name="Woodward J.R."/>
            <person name="Winckler T."/>
            <person name="Tanaka Y."/>
            <person name="Shaulsky G."/>
            <person name="Schleicher M."/>
            <person name="Weinstock G.M."/>
            <person name="Rosenthal A."/>
            <person name="Cox E.C."/>
            <person name="Chisholm R.L."/>
            <person name="Gibbs R.A."/>
            <person name="Loomis W.F."/>
            <person name="Platzer M."/>
            <person name="Kay R.R."/>
            <person name="Williams J.G."/>
            <person name="Dear P.H."/>
            <person name="Noegel A.A."/>
            <person name="Barrell B.G."/>
            <person name="Kuspa A."/>
        </authorList>
    </citation>
    <scope>NUCLEOTIDE SEQUENCE [LARGE SCALE GENOMIC DNA]</scope>
    <source>
        <strain>AX4</strain>
    </source>
</reference>
<protein>
    <recommendedName>
        <fullName evidence="1">Large ribosomal subunit protein eL22A</fullName>
    </recommendedName>
    <alternativeName>
        <fullName>60S ribosomal protein L22 1</fullName>
    </alternativeName>
</protein>
<feature type="chain" id="PRO_0000325946" description="Large ribosomal subunit protein eL22A">
    <location>
        <begin position="1"/>
        <end position="116"/>
    </location>
</feature>
<gene>
    <name type="primary">rpl22</name>
    <name type="ORF">DDB_G0288101</name>
</gene>
<keyword id="KW-1185">Reference proteome</keyword>
<keyword id="KW-0687">Ribonucleoprotein</keyword>
<keyword id="KW-0689">Ribosomal protein</keyword>